<evidence type="ECO:0000250" key="1">
    <source>
        <dbReference type="UniProtKB" id="Q96FT9"/>
    </source>
</evidence>
<evidence type="ECO:0000256" key="2">
    <source>
        <dbReference type="SAM" id="MobiDB-lite"/>
    </source>
</evidence>
<evidence type="ECO:0000305" key="3"/>
<accession>E2QSX5</accession>
<feature type="chain" id="PRO_0000409494" description="Intraflagellar transport protein 43 homolog">
    <location>
        <begin position="1"/>
        <end position="209"/>
    </location>
</feature>
<feature type="region of interest" description="Disordered" evidence="2">
    <location>
        <begin position="1"/>
        <end position="100"/>
    </location>
</feature>
<feature type="compositionally biased region" description="Polar residues" evidence="2">
    <location>
        <begin position="28"/>
        <end position="45"/>
    </location>
</feature>
<feature type="compositionally biased region" description="Basic and acidic residues" evidence="2">
    <location>
        <begin position="75"/>
        <end position="85"/>
    </location>
</feature>
<feature type="modified residue" description="N-acetylmethionine" evidence="1">
    <location>
        <position position="1"/>
    </location>
</feature>
<feature type="modified residue" description="Phosphoserine" evidence="1">
    <location>
        <position position="77"/>
    </location>
</feature>
<comment type="function">
    <text evidence="1">As a component of IFT complex A (IFT-A), a complex required for retrograde ciliary transport and entry into cilia of G protein-coupled receptors (GPCRs), it is involved in ciliogenesis. Involved in retrograde ciliary transport along microtubules from the ciliary tip to the base.</text>
</comment>
<comment type="subunit">
    <text evidence="1">Component of the IFT complex A (IFT-A) complex. IFT-A complex is divided into a core subcomplex composed of IFT122:IFT140:WDR19 which is associated with TULP3 and a peripheral subcomplex composed of IFT43:WDR35:TTC21B. Interacts directy with IFT122, WDR35 and TTC21B.</text>
</comment>
<comment type="subcellular location">
    <subcellularLocation>
        <location evidence="1">Cytoplasm</location>
        <location evidence="1">Cytoskeleton</location>
    </subcellularLocation>
    <subcellularLocation>
        <location evidence="1">Cell projection</location>
        <location evidence="1">Cilium</location>
    </subcellularLocation>
    <text evidence="1">Associated with microtubules. Localized at the distal tip of the cilium.</text>
</comment>
<comment type="similarity">
    <text evidence="3">Belongs to the IFT43 family.</text>
</comment>
<protein>
    <recommendedName>
        <fullName>Intraflagellar transport protein 43 homolog</fullName>
    </recommendedName>
</protein>
<proteinExistence type="inferred from homology"/>
<dbReference type="SMR" id="E2QSX5"/>
<dbReference type="FunCoup" id="E2QSX5">
    <property type="interactions" value="20"/>
</dbReference>
<dbReference type="STRING" id="9615.ENSCAFP00000064738"/>
<dbReference type="PaxDb" id="9612-ENSCAFP00000025211"/>
<dbReference type="eggNOG" id="ENOG502RXJ2">
    <property type="taxonomic scope" value="Eukaryota"/>
</dbReference>
<dbReference type="InParanoid" id="E2QSX5"/>
<dbReference type="OrthoDB" id="206950at2759"/>
<dbReference type="Proteomes" id="UP000002254">
    <property type="component" value="Unplaced"/>
</dbReference>
<dbReference type="Proteomes" id="UP000694429">
    <property type="component" value="Unplaced"/>
</dbReference>
<dbReference type="Proteomes" id="UP000694542">
    <property type="component" value="Unplaced"/>
</dbReference>
<dbReference type="Proteomes" id="UP000805418">
    <property type="component" value="Unplaced"/>
</dbReference>
<dbReference type="GO" id="GO:0005929">
    <property type="term" value="C:cilium"/>
    <property type="evidence" value="ECO:0000250"/>
    <property type="project" value="UniProtKB"/>
</dbReference>
<dbReference type="GO" id="GO:0005737">
    <property type="term" value="C:cytoplasm"/>
    <property type="evidence" value="ECO:0007669"/>
    <property type="project" value="UniProtKB-KW"/>
</dbReference>
<dbReference type="GO" id="GO:0005856">
    <property type="term" value="C:cytoskeleton"/>
    <property type="evidence" value="ECO:0007669"/>
    <property type="project" value="UniProtKB-SubCell"/>
</dbReference>
<dbReference type="GO" id="GO:0030991">
    <property type="term" value="C:intraciliary transport particle A"/>
    <property type="evidence" value="ECO:0000250"/>
    <property type="project" value="UniProtKB"/>
</dbReference>
<dbReference type="GO" id="GO:0060271">
    <property type="term" value="P:cilium assembly"/>
    <property type="evidence" value="ECO:0000250"/>
    <property type="project" value="UniProtKB"/>
</dbReference>
<dbReference type="GO" id="GO:0035721">
    <property type="term" value="P:intraciliary retrograde transport"/>
    <property type="evidence" value="ECO:0000250"/>
    <property type="project" value="UniProtKB"/>
</dbReference>
<dbReference type="InterPro" id="IPR029302">
    <property type="entry name" value="IFT43"/>
</dbReference>
<dbReference type="PANTHER" id="PTHR33724">
    <property type="entry name" value="INTRAFLAGELLAR TRANSPORT PROTEIN 43 HOMOLOG"/>
    <property type="match status" value="1"/>
</dbReference>
<dbReference type="PANTHER" id="PTHR33724:SF1">
    <property type="entry name" value="INTRAFLAGELLAR TRANSPORT PROTEIN 43 HOMOLOG"/>
    <property type="match status" value="1"/>
</dbReference>
<dbReference type="Pfam" id="PF15305">
    <property type="entry name" value="IFT43"/>
    <property type="match status" value="1"/>
</dbReference>
<gene>
    <name type="primary">IFT43</name>
</gene>
<name>IFT43_CANLF</name>
<sequence>MEDLLDLGGERRRGSTTSGPRMGRRAQQESAQVENHLSGKNSSILTGEVAPPPKPPRRQGGWADDSMKTSKSGRRASEEVEEGSHRLRQQSFGGSDDGGDIPVIPDLEDVQEEDFALQVAAPPSIQVNRVMTYRDLDNDLMKYAAFQTLDGEIDLKLLTKVLAPEHEVREDDVNWDWDRLYTEVSSELLSEWDLLQSEKEDPMGQPAHT</sequence>
<reference key="1">
    <citation type="journal article" date="2005" name="Nature">
        <title>Genome sequence, comparative analysis and haplotype structure of the domestic dog.</title>
        <authorList>
            <person name="Lindblad-Toh K."/>
            <person name="Wade C.M."/>
            <person name="Mikkelsen T.S."/>
            <person name="Karlsson E.K."/>
            <person name="Jaffe D.B."/>
            <person name="Kamal M."/>
            <person name="Clamp M."/>
            <person name="Chang J.L."/>
            <person name="Kulbokas E.J. III"/>
            <person name="Zody M.C."/>
            <person name="Mauceli E."/>
            <person name="Xie X."/>
            <person name="Breen M."/>
            <person name="Wayne R.K."/>
            <person name="Ostrander E.A."/>
            <person name="Ponting C.P."/>
            <person name="Galibert F."/>
            <person name="Smith D.R."/>
            <person name="deJong P.J."/>
            <person name="Kirkness E.F."/>
            <person name="Alvarez P."/>
            <person name="Biagi T."/>
            <person name="Brockman W."/>
            <person name="Butler J."/>
            <person name="Chin C.-W."/>
            <person name="Cook A."/>
            <person name="Cuff J."/>
            <person name="Daly M.J."/>
            <person name="DeCaprio D."/>
            <person name="Gnerre S."/>
            <person name="Grabherr M."/>
            <person name="Kellis M."/>
            <person name="Kleber M."/>
            <person name="Bardeleben C."/>
            <person name="Goodstadt L."/>
            <person name="Heger A."/>
            <person name="Hitte C."/>
            <person name="Kim L."/>
            <person name="Koepfli K.-P."/>
            <person name="Parker H.G."/>
            <person name="Pollinger J.P."/>
            <person name="Searle S.M.J."/>
            <person name="Sutter N.B."/>
            <person name="Thomas R."/>
            <person name="Webber C."/>
            <person name="Baldwin J."/>
            <person name="Abebe A."/>
            <person name="Abouelleil A."/>
            <person name="Aftuck L."/>
            <person name="Ait-Zahra M."/>
            <person name="Aldredge T."/>
            <person name="Allen N."/>
            <person name="An P."/>
            <person name="Anderson S."/>
            <person name="Antoine C."/>
            <person name="Arachchi H."/>
            <person name="Aslam A."/>
            <person name="Ayotte L."/>
            <person name="Bachantsang P."/>
            <person name="Barry A."/>
            <person name="Bayul T."/>
            <person name="Benamara M."/>
            <person name="Berlin A."/>
            <person name="Bessette D."/>
            <person name="Blitshteyn B."/>
            <person name="Bloom T."/>
            <person name="Blye J."/>
            <person name="Boguslavskiy L."/>
            <person name="Bonnet C."/>
            <person name="Boukhgalter B."/>
            <person name="Brown A."/>
            <person name="Cahill P."/>
            <person name="Calixte N."/>
            <person name="Camarata J."/>
            <person name="Cheshatsang Y."/>
            <person name="Chu J."/>
            <person name="Citroen M."/>
            <person name="Collymore A."/>
            <person name="Cooke P."/>
            <person name="Dawoe T."/>
            <person name="Daza R."/>
            <person name="Decktor K."/>
            <person name="DeGray S."/>
            <person name="Dhargay N."/>
            <person name="Dooley K."/>
            <person name="Dooley K."/>
            <person name="Dorje P."/>
            <person name="Dorjee K."/>
            <person name="Dorris L."/>
            <person name="Duffey N."/>
            <person name="Dupes A."/>
            <person name="Egbiremolen O."/>
            <person name="Elong R."/>
            <person name="Falk J."/>
            <person name="Farina A."/>
            <person name="Faro S."/>
            <person name="Ferguson D."/>
            <person name="Ferreira P."/>
            <person name="Fisher S."/>
            <person name="FitzGerald M."/>
            <person name="Foley K."/>
            <person name="Foley C."/>
            <person name="Franke A."/>
            <person name="Friedrich D."/>
            <person name="Gage D."/>
            <person name="Garber M."/>
            <person name="Gearin G."/>
            <person name="Giannoukos G."/>
            <person name="Goode T."/>
            <person name="Goyette A."/>
            <person name="Graham J."/>
            <person name="Grandbois E."/>
            <person name="Gyaltsen K."/>
            <person name="Hafez N."/>
            <person name="Hagopian D."/>
            <person name="Hagos B."/>
            <person name="Hall J."/>
            <person name="Healy C."/>
            <person name="Hegarty R."/>
            <person name="Honan T."/>
            <person name="Horn A."/>
            <person name="Houde N."/>
            <person name="Hughes L."/>
            <person name="Hunnicutt L."/>
            <person name="Husby M."/>
            <person name="Jester B."/>
            <person name="Jones C."/>
            <person name="Kamat A."/>
            <person name="Kanga B."/>
            <person name="Kells C."/>
            <person name="Khazanovich D."/>
            <person name="Kieu A.C."/>
            <person name="Kisner P."/>
            <person name="Kumar M."/>
            <person name="Lance K."/>
            <person name="Landers T."/>
            <person name="Lara M."/>
            <person name="Lee W."/>
            <person name="Leger J.-P."/>
            <person name="Lennon N."/>
            <person name="Leuper L."/>
            <person name="LeVine S."/>
            <person name="Liu J."/>
            <person name="Liu X."/>
            <person name="Lokyitsang Y."/>
            <person name="Lokyitsang T."/>
            <person name="Lui A."/>
            <person name="Macdonald J."/>
            <person name="Major J."/>
            <person name="Marabella R."/>
            <person name="Maru K."/>
            <person name="Matthews C."/>
            <person name="McDonough S."/>
            <person name="Mehta T."/>
            <person name="Meldrim J."/>
            <person name="Melnikov A."/>
            <person name="Meneus L."/>
            <person name="Mihalev A."/>
            <person name="Mihova T."/>
            <person name="Miller K."/>
            <person name="Mittelman R."/>
            <person name="Mlenga V."/>
            <person name="Mulrain L."/>
            <person name="Munson G."/>
            <person name="Navidi A."/>
            <person name="Naylor J."/>
            <person name="Nguyen T."/>
            <person name="Nguyen N."/>
            <person name="Nguyen C."/>
            <person name="Nguyen T."/>
            <person name="Nicol R."/>
            <person name="Norbu N."/>
            <person name="Norbu C."/>
            <person name="Novod N."/>
            <person name="Nyima T."/>
            <person name="Olandt P."/>
            <person name="O'Neill B."/>
            <person name="O'Neill K."/>
            <person name="Osman S."/>
            <person name="Oyono L."/>
            <person name="Patti C."/>
            <person name="Perrin D."/>
            <person name="Phunkhang P."/>
            <person name="Pierre F."/>
            <person name="Priest M."/>
            <person name="Rachupka A."/>
            <person name="Raghuraman S."/>
            <person name="Rameau R."/>
            <person name="Ray V."/>
            <person name="Raymond C."/>
            <person name="Rege F."/>
            <person name="Rise C."/>
            <person name="Rogers J."/>
            <person name="Rogov P."/>
            <person name="Sahalie J."/>
            <person name="Settipalli S."/>
            <person name="Sharpe T."/>
            <person name="Shea T."/>
            <person name="Sheehan M."/>
            <person name="Sherpa N."/>
            <person name="Shi J."/>
            <person name="Shih D."/>
            <person name="Sloan J."/>
            <person name="Smith C."/>
            <person name="Sparrow T."/>
            <person name="Stalker J."/>
            <person name="Stange-Thomann N."/>
            <person name="Stavropoulos S."/>
            <person name="Stone C."/>
            <person name="Stone S."/>
            <person name="Sykes S."/>
            <person name="Tchuinga P."/>
            <person name="Tenzing P."/>
            <person name="Tesfaye S."/>
            <person name="Thoulutsang D."/>
            <person name="Thoulutsang Y."/>
            <person name="Topham K."/>
            <person name="Topping I."/>
            <person name="Tsamla T."/>
            <person name="Vassiliev H."/>
            <person name="Venkataraman V."/>
            <person name="Vo A."/>
            <person name="Wangchuk T."/>
            <person name="Wangdi T."/>
            <person name="Weiand M."/>
            <person name="Wilkinson J."/>
            <person name="Wilson A."/>
            <person name="Yadav S."/>
            <person name="Yang S."/>
            <person name="Yang X."/>
            <person name="Young G."/>
            <person name="Yu Q."/>
            <person name="Zainoun J."/>
            <person name="Zembek L."/>
            <person name="Zimmer A."/>
            <person name="Lander E.S."/>
        </authorList>
    </citation>
    <scope>NUCLEOTIDE SEQUENCE [LARGE SCALE GENOMIC DNA]</scope>
    <source>
        <strain>Boxer</strain>
    </source>
</reference>
<organism>
    <name type="scientific">Canis lupus familiaris</name>
    <name type="common">Dog</name>
    <name type="synonym">Canis familiaris</name>
    <dbReference type="NCBI Taxonomy" id="9615"/>
    <lineage>
        <taxon>Eukaryota</taxon>
        <taxon>Metazoa</taxon>
        <taxon>Chordata</taxon>
        <taxon>Craniata</taxon>
        <taxon>Vertebrata</taxon>
        <taxon>Euteleostomi</taxon>
        <taxon>Mammalia</taxon>
        <taxon>Eutheria</taxon>
        <taxon>Laurasiatheria</taxon>
        <taxon>Carnivora</taxon>
        <taxon>Caniformia</taxon>
        <taxon>Canidae</taxon>
        <taxon>Canis</taxon>
    </lineage>
</organism>
<keyword id="KW-0007">Acetylation</keyword>
<keyword id="KW-0966">Cell projection</keyword>
<keyword id="KW-0970">Cilium biogenesis/degradation</keyword>
<keyword id="KW-0963">Cytoplasm</keyword>
<keyword id="KW-0206">Cytoskeleton</keyword>
<keyword id="KW-0597">Phosphoprotein</keyword>
<keyword id="KW-1185">Reference proteome</keyword>